<name>ETT1_YEAS7</name>
<reference key="1">
    <citation type="journal article" date="2007" name="Proc. Natl. Acad. Sci. U.S.A.">
        <title>Genome sequencing and comparative analysis of Saccharomyces cerevisiae strain YJM789.</title>
        <authorList>
            <person name="Wei W."/>
            <person name="McCusker J.H."/>
            <person name="Hyman R.W."/>
            <person name="Jones T."/>
            <person name="Ning Y."/>
            <person name="Cao Z."/>
            <person name="Gu Z."/>
            <person name="Bruno D."/>
            <person name="Miranda M."/>
            <person name="Nguyen M."/>
            <person name="Wilhelmy J."/>
            <person name="Komp C."/>
            <person name="Tamse R."/>
            <person name="Wang X."/>
            <person name="Jia P."/>
            <person name="Luedi P."/>
            <person name="Oefner P.J."/>
            <person name="David L."/>
            <person name="Dietrich F.S."/>
            <person name="Li Y."/>
            <person name="Davis R.W."/>
            <person name="Steinmetz L.M."/>
        </authorList>
    </citation>
    <scope>NUCLEOTIDE SEQUENCE [LARGE SCALE GENOMIC DNA]</scope>
    <source>
        <strain>YJM789</strain>
    </source>
</reference>
<organism>
    <name type="scientific">Saccharomyces cerevisiae (strain YJM789)</name>
    <name type="common">Baker's yeast</name>
    <dbReference type="NCBI Taxonomy" id="307796"/>
    <lineage>
        <taxon>Eukaryota</taxon>
        <taxon>Fungi</taxon>
        <taxon>Dikarya</taxon>
        <taxon>Ascomycota</taxon>
        <taxon>Saccharomycotina</taxon>
        <taxon>Saccharomycetes</taxon>
        <taxon>Saccharomycetales</taxon>
        <taxon>Saccharomycetaceae</taxon>
        <taxon>Saccharomyces</taxon>
    </lineage>
</organism>
<proteinExistence type="inferred from homology"/>
<accession>A6ZNQ5</accession>
<dbReference type="EMBL" id="AAFW02000030">
    <property type="protein sequence ID" value="EDN63920.1"/>
    <property type="molecule type" value="Genomic_DNA"/>
</dbReference>
<dbReference type="SMR" id="A6ZNQ5"/>
<dbReference type="HOGENOM" id="CLU_050427_0_0_1"/>
<dbReference type="Proteomes" id="UP000007060">
    <property type="component" value="Unassembled WGS sequence"/>
</dbReference>
<dbReference type="GO" id="GO:0005634">
    <property type="term" value="C:nucleus"/>
    <property type="evidence" value="ECO:0007669"/>
    <property type="project" value="UniProtKB-SubCell"/>
</dbReference>
<dbReference type="GO" id="GO:2000640">
    <property type="term" value="P:positive regulation of SREBP signaling pathway"/>
    <property type="evidence" value="ECO:0007669"/>
    <property type="project" value="TreeGrafter"/>
</dbReference>
<dbReference type="GO" id="GO:0006417">
    <property type="term" value="P:regulation of translation"/>
    <property type="evidence" value="ECO:0007669"/>
    <property type="project" value="UniProtKB-KW"/>
</dbReference>
<dbReference type="Gene3D" id="1.25.40.10">
    <property type="entry name" value="Tetratricopeptide repeat domain"/>
    <property type="match status" value="1"/>
</dbReference>
<dbReference type="InterPro" id="IPR024318">
    <property type="entry name" value="Nro1/ETT1"/>
</dbReference>
<dbReference type="InterPro" id="IPR011990">
    <property type="entry name" value="TPR-like_helical_dom_sf"/>
</dbReference>
<dbReference type="PANTHER" id="PTHR28290">
    <property type="entry name" value="ENHANCER OF TRANSLATION TERMINATION 1"/>
    <property type="match status" value="1"/>
</dbReference>
<dbReference type="PANTHER" id="PTHR28290:SF1">
    <property type="entry name" value="ENHANCER OF TRANSLATION TERMINATION 1"/>
    <property type="match status" value="1"/>
</dbReference>
<dbReference type="Pfam" id="PF12753">
    <property type="entry name" value="Nro1"/>
    <property type="match status" value="1"/>
</dbReference>
<keyword id="KW-0539">Nucleus</keyword>
<keyword id="KW-0597">Phosphoprotein</keyword>
<keyword id="KW-0804">Transcription</keyword>
<keyword id="KW-0805">Transcription regulation</keyword>
<keyword id="KW-0810">Translation regulation</keyword>
<protein>
    <recommendedName>
        <fullName>Enhancer of translation termination 1</fullName>
    </recommendedName>
</protein>
<feature type="chain" id="PRO_0000406628" description="Enhancer of translation termination 1">
    <location>
        <begin position="1"/>
        <end position="412"/>
    </location>
</feature>
<feature type="region of interest" description="Disordered" evidence="3">
    <location>
        <begin position="1"/>
        <end position="45"/>
    </location>
</feature>
<feature type="compositionally biased region" description="Basic and acidic residues" evidence="3">
    <location>
        <begin position="17"/>
        <end position="31"/>
    </location>
</feature>
<feature type="compositionally biased region" description="Polar residues" evidence="3">
    <location>
        <begin position="32"/>
        <end position="41"/>
    </location>
</feature>
<feature type="modified residue" description="Phosphoserine" evidence="2">
    <location>
        <position position="30"/>
    </location>
</feature>
<gene>
    <name type="primary">ETT1</name>
    <name type="ORF">SCY_5123</name>
</gene>
<evidence type="ECO:0000250" key="1"/>
<evidence type="ECO:0000250" key="2">
    <source>
        <dbReference type="UniProtKB" id="Q08421"/>
    </source>
</evidence>
<evidence type="ECO:0000256" key="3">
    <source>
        <dbReference type="SAM" id="MobiDB-lite"/>
    </source>
</evidence>
<evidence type="ECO:0000305" key="4"/>
<sequence length="412" mass="47468">MAKRPLGLGKQSREKKRKVESVEKKSDEPSRESTPVRSQMSVELDDDADLDDELAQLKGLWSKYFHSDRDDEYVLNGIVHECDRLLRLSEEDKEIKKTLNDIFHGIYALALSELTIFKAGDEEATEEKRKKDVSSFFENAIERVELGLSHFPESQFLKLVLAKIIFQRIPLEYISNLHLKSKDKKLDLVGQLEHGKKHFSIYENDTEFTFEILQMVNDLLDIVENFGREQSIQEGIDSDNEEEEELIDIELEPEHPVYPLQQSLEANYEWLRNHFDKLLDNTNTDMKIYASIANTLGELYLKKAEEPSKVFLSLQYDDGSSKKVSDKEAKNVQETALKHTKKALEYLEKAKLEDDPDTWVQVAEAYIDLGNLLDNESAEQEEAYKTAEEILGKANKASHGKFQDVLDNFLQG</sequence>
<comment type="function">
    <text evidence="1">Required for correct translation termination and probably involved in regulation of hypoxic gene expression in association TPA1. Inhibits replication of Brome mosaic virus (By similarity).</text>
</comment>
<comment type="subunit">
    <text evidence="1">Interacts with STM1.</text>
</comment>
<comment type="subcellular location">
    <subcellularLocation>
        <location evidence="1">Nucleus</location>
    </subcellularLocation>
</comment>
<comment type="similarity">
    <text evidence="4">Belongs to the ETT1 family.</text>
</comment>